<evidence type="ECO:0000255" key="1">
    <source>
        <dbReference type="HAMAP-Rule" id="MF_01318"/>
    </source>
</evidence>
<evidence type="ECO:0000305" key="2"/>
<comment type="function">
    <text evidence="1">Binds directly to 23S rRNA. The L1 stalk is quite mobile in the ribosome, and is involved in E site tRNA release.</text>
</comment>
<comment type="function">
    <text evidence="1">Protein L1 is also a translational repressor protein, it controls the translation of the L11 operon by binding to its mRNA.</text>
</comment>
<comment type="subunit">
    <text evidence="1">Part of the 50S ribosomal subunit.</text>
</comment>
<comment type="similarity">
    <text evidence="1">Belongs to the universal ribosomal protein uL1 family.</text>
</comment>
<gene>
    <name evidence="1" type="primary">rplA</name>
    <name type="ordered locus">Adeh_1589</name>
</gene>
<sequence>MAHVAKKYKAAAEKVDRAKRYKLDEAMSLVKQTATKKFDETVDASINLGVDPKHADQVVRGAVVLPHGMGKTVRLAVFAKGDKAKEAQEAGADIVGAEDLAEKIQGGFMDFDKLIATPDMMGVVGRLGKILGPRGLMPNPKVGTVTMDLARAVKEQKAGKVEFRVEKAGIVHVPFGKASFDPEKLKANFSAIMEVIYKAKPQTAKGVYVKNVTLSTTMGPGIKLDLAELAAQHA</sequence>
<accession>Q2II81</accession>
<reference key="1">
    <citation type="submission" date="2006-01" db="EMBL/GenBank/DDBJ databases">
        <title>Complete sequence of Anaeromyxobacter dehalogenans 2CP-C.</title>
        <authorList>
            <person name="Copeland A."/>
            <person name="Lucas S."/>
            <person name="Lapidus A."/>
            <person name="Barry K."/>
            <person name="Detter J.C."/>
            <person name="Glavina T."/>
            <person name="Hammon N."/>
            <person name="Israni S."/>
            <person name="Pitluck S."/>
            <person name="Brettin T."/>
            <person name="Bruce D."/>
            <person name="Han C."/>
            <person name="Tapia R."/>
            <person name="Gilna P."/>
            <person name="Kiss H."/>
            <person name="Schmutz J."/>
            <person name="Larimer F."/>
            <person name="Land M."/>
            <person name="Kyrpides N."/>
            <person name="Anderson I."/>
            <person name="Sanford R.A."/>
            <person name="Ritalahti K.M."/>
            <person name="Thomas H.S."/>
            <person name="Kirby J.R."/>
            <person name="Zhulin I.B."/>
            <person name="Loeffler F.E."/>
            <person name="Richardson P."/>
        </authorList>
    </citation>
    <scope>NUCLEOTIDE SEQUENCE [LARGE SCALE GENOMIC DNA]</scope>
    <source>
        <strain>2CP-C</strain>
    </source>
</reference>
<feature type="chain" id="PRO_0000307957" description="Large ribosomal subunit protein uL1">
    <location>
        <begin position="1"/>
        <end position="234"/>
    </location>
</feature>
<organism>
    <name type="scientific">Anaeromyxobacter dehalogenans (strain 2CP-C)</name>
    <dbReference type="NCBI Taxonomy" id="290397"/>
    <lineage>
        <taxon>Bacteria</taxon>
        <taxon>Pseudomonadati</taxon>
        <taxon>Myxococcota</taxon>
        <taxon>Myxococcia</taxon>
        <taxon>Myxococcales</taxon>
        <taxon>Cystobacterineae</taxon>
        <taxon>Anaeromyxobacteraceae</taxon>
        <taxon>Anaeromyxobacter</taxon>
    </lineage>
</organism>
<name>RL1_ANADE</name>
<protein>
    <recommendedName>
        <fullName evidence="1">Large ribosomal subunit protein uL1</fullName>
    </recommendedName>
    <alternativeName>
        <fullName evidence="2">50S ribosomal protein L1</fullName>
    </alternativeName>
</protein>
<dbReference type="EMBL" id="CP000251">
    <property type="protein sequence ID" value="ABC81362.1"/>
    <property type="molecule type" value="Genomic_DNA"/>
</dbReference>
<dbReference type="RefSeq" id="WP_011420645.1">
    <property type="nucleotide sequence ID" value="NC_007760.1"/>
</dbReference>
<dbReference type="SMR" id="Q2II81"/>
<dbReference type="STRING" id="290397.Adeh_1589"/>
<dbReference type="KEGG" id="ade:Adeh_1589"/>
<dbReference type="eggNOG" id="COG0081">
    <property type="taxonomic scope" value="Bacteria"/>
</dbReference>
<dbReference type="HOGENOM" id="CLU_062853_0_0_7"/>
<dbReference type="OrthoDB" id="9803740at2"/>
<dbReference type="Proteomes" id="UP000001935">
    <property type="component" value="Chromosome"/>
</dbReference>
<dbReference type="GO" id="GO:0022625">
    <property type="term" value="C:cytosolic large ribosomal subunit"/>
    <property type="evidence" value="ECO:0007669"/>
    <property type="project" value="TreeGrafter"/>
</dbReference>
<dbReference type="GO" id="GO:0019843">
    <property type="term" value="F:rRNA binding"/>
    <property type="evidence" value="ECO:0007669"/>
    <property type="project" value="UniProtKB-UniRule"/>
</dbReference>
<dbReference type="GO" id="GO:0003735">
    <property type="term" value="F:structural constituent of ribosome"/>
    <property type="evidence" value="ECO:0007669"/>
    <property type="project" value="InterPro"/>
</dbReference>
<dbReference type="GO" id="GO:0000049">
    <property type="term" value="F:tRNA binding"/>
    <property type="evidence" value="ECO:0007669"/>
    <property type="project" value="UniProtKB-KW"/>
</dbReference>
<dbReference type="GO" id="GO:0006417">
    <property type="term" value="P:regulation of translation"/>
    <property type="evidence" value="ECO:0007669"/>
    <property type="project" value="UniProtKB-KW"/>
</dbReference>
<dbReference type="GO" id="GO:0006412">
    <property type="term" value="P:translation"/>
    <property type="evidence" value="ECO:0007669"/>
    <property type="project" value="UniProtKB-UniRule"/>
</dbReference>
<dbReference type="CDD" id="cd00403">
    <property type="entry name" value="Ribosomal_L1"/>
    <property type="match status" value="1"/>
</dbReference>
<dbReference type="FunFam" id="3.40.50.790:FF:000001">
    <property type="entry name" value="50S ribosomal protein L1"/>
    <property type="match status" value="1"/>
</dbReference>
<dbReference type="Gene3D" id="3.30.190.20">
    <property type="match status" value="1"/>
</dbReference>
<dbReference type="Gene3D" id="3.40.50.790">
    <property type="match status" value="1"/>
</dbReference>
<dbReference type="HAMAP" id="MF_01318_B">
    <property type="entry name" value="Ribosomal_uL1_B"/>
    <property type="match status" value="1"/>
</dbReference>
<dbReference type="InterPro" id="IPR005878">
    <property type="entry name" value="Ribosom_uL1_bac-type"/>
</dbReference>
<dbReference type="InterPro" id="IPR002143">
    <property type="entry name" value="Ribosomal_uL1"/>
</dbReference>
<dbReference type="InterPro" id="IPR023674">
    <property type="entry name" value="Ribosomal_uL1-like"/>
</dbReference>
<dbReference type="InterPro" id="IPR028364">
    <property type="entry name" value="Ribosomal_uL1/biogenesis"/>
</dbReference>
<dbReference type="InterPro" id="IPR016095">
    <property type="entry name" value="Ribosomal_uL1_3-a/b-sand"/>
</dbReference>
<dbReference type="InterPro" id="IPR023673">
    <property type="entry name" value="Ribosomal_uL1_CS"/>
</dbReference>
<dbReference type="NCBIfam" id="TIGR01169">
    <property type="entry name" value="rplA_bact"/>
    <property type="match status" value="1"/>
</dbReference>
<dbReference type="PANTHER" id="PTHR36427">
    <property type="entry name" value="54S RIBOSOMAL PROTEIN L1, MITOCHONDRIAL"/>
    <property type="match status" value="1"/>
</dbReference>
<dbReference type="PANTHER" id="PTHR36427:SF3">
    <property type="entry name" value="LARGE RIBOSOMAL SUBUNIT PROTEIN UL1M"/>
    <property type="match status" value="1"/>
</dbReference>
<dbReference type="Pfam" id="PF00687">
    <property type="entry name" value="Ribosomal_L1"/>
    <property type="match status" value="1"/>
</dbReference>
<dbReference type="PIRSF" id="PIRSF002155">
    <property type="entry name" value="Ribosomal_L1"/>
    <property type="match status" value="1"/>
</dbReference>
<dbReference type="SUPFAM" id="SSF56808">
    <property type="entry name" value="Ribosomal protein L1"/>
    <property type="match status" value="1"/>
</dbReference>
<dbReference type="PROSITE" id="PS01199">
    <property type="entry name" value="RIBOSOMAL_L1"/>
    <property type="match status" value="1"/>
</dbReference>
<keyword id="KW-1185">Reference proteome</keyword>
<keyword id="KW-0678">Repressor</keyword>
<keyword id="KW-0687">Ribonucleoprotein</keyword>
<keyword id="KW-0689">Ribosomal protein</keyword>
<keyword id="KW-0694">RNA-binding</keyword>
<keyword id="KW-0699">rRNA-binding</keyword>
<keyword id="KW-0810">Translation regulation</keyword>
<keyword id="KW-0820">tRNA-binding</keyword>
<proteinExistence type="inferred from homology"/>